<accession>A7IFZ0</accession>
<feature type="chain" id="PRO_1000143324" description="Small ribosomal subunit protein uS17">
    <location>
        <begin position="1"/>
        <end position="82"/>
    </location>
</feature>
<dbReference type="EMBL" id="CP000781">
    <property type="protein sequence ID" value="ABS66933.1"/>
    <property type="molecule type" value="Genomic_DNA"/>
</dbReference>
<dbReference type="SMR" id="A7IFZ0"/>
<dbReference type="STRING" id="78245.Xaut_1688"/>
<dbReference type="KEGG" id="xau:Xaut_1688"/>
<dbReference type="eggNOG" id="COG0186">
    <property type="taxonomic scope" value="Bacteria"/>
</dbReference>
<dbReference type="HOGENOM" id="CLU_073626_1_1_5"/>
<dbReference type="OrthoDB" id="9811714at2"/>
<dbReference type="PhylomeDB" id="A7IFZ0"/>
<dbReference type="Proteomes" id="UP000002417">
    <property type="component" value="Chromosome"/>
</dbReference>
<dbReference type="GO" id="GO:0022627">
    <property type="term" value="C:cytosolic small ribosomal subunit"/>
    <property type="evidence" value="ECO:0007669"/>
    <property type="project" value="TreeGrafter"/>
</dbReference>
<dbReference type="GO" id="GO:0019843">
    <property type="term" value="F:rRNA binding"/>
    <property type="evidence" value="ECO:0007669"/>
    <property type="project" value="UniProtKB-UniRule"/>
</dbReference>
<dbReference type="GO" id="GO:0003735">
    <property type="term" value="F:structural constituent of ribosome"/>
    <property type="evidence" value="ECO:0007669"/>
    <property type="project" value="InterPro"/>
</dbReference>
<dbReference type="GO" id="GO:0006412">
    <property type="term" value="P:translation"/>
    <property type="evidence" value="ECO:0007669"/>
    <property type="project" value="UniProtKB-UniRule"/>
</dbReference>
<dbReference type="CDD" id="cd00364">
    <property type="entry name" value="Ribosomal_uS17"/>
    <property type="match status" value="1"/>
</dbReference>
<dbReference type="FunFam" id="2.40.50.140:FF:000204">
    <property type="entry name" value="30S ribosomal protein S17"/>
    <property type="match status" value="1"/>
</dbReference>
<dbReference type="Gene3D" id="2.40.50.140">
    <property type="entry name" value="Nucleic acid-binding proteins"/>
    <property type="match status" value="1"/>
</dbReference>
<dbReference type="HAMAP" id="MF_01345_B">
    <property type="entry name" value="Ribosomal_uS17_B"/>
    <property type="match status" value="1"/>
</dbReference>
<dbReference type="InterPro" id="IPR012340">
    <property type="entry name" value="NA-bd_OB-fold"/>
</dbReference>
<dbReference type="InterPro" id="IPR000266">
    <property type="entry name" value="Ribosomal_uS17"/>
</dbReference>
<dbReference type="InterPro" id="IPR019984">
    <property type="entry name" value="Ribosomal_uS17_bact/chlr"/>
</dbReference>
<dbReference type="InterPro" id="IPR019979">
    <property type="entry name" value="Ribosomal_uS17_CS"/>
</dbReference>
<dbReference type="NCBIfam" id="NF004123">
    <property type="entry name" value="PRK05610.1"/>
    <property type="match status" value="1"/>
</dbReference>
<dbReference type="NCBIfam" id="TIGR03635">
    <property type="entry name" value="uS17_bact"/>
    <property type="match status" value="1"/>
</dbReference>
<dbReference type="PANTHER" id="PTHR10744">
    <property type="entry name" value="40S RIBOSOMAL PROTEIN S11 FAMILY MEMBER"/>
    <property type="match status" value="1"/>
</dbReference>
<dbReference type="PANTHER" id="PTHR10744:SF1">
    <property type="entry name" value="SMALL RIBOSOMAL SUBUNIT PROTEIN US17M"/>
    <property type="match status" value="1"/>
</dbReference>
<dbReference type="Pfam" id="PF00366">
    <property type="entry name" value="Ribosomal_S17"/>
    <property type="match status" value="1"/>
</dbReference>
<dbReference type="PRINTS" id="PR00973">
    <property type="entry name" value="RIBOSOMALS17"/>
</dbReference>
<dbReference type="SUPFAM" id="SSF50249">
    <property type="entry name" value="Nucleic acid-binding proteins"/>
    <property type="match status" value="1"/>
</dbReference>
<dbReference type="PROSITE" id="PS00056">
    <property type="entry name" value="RIBOSOMAL_S17"/>
    <property type="match status" value="1"/>
</dbReference>
<organism>
    <name type="scientific">Xanthobacter autotrophicus (strain ATCC BAA-1158 / Py2)</name>
    <dbReference type="NCBI Taxonomy" id="78245"/>
    <lineage>
        <taxon>Bacteria</taxon>
        <taxon>Pseudomonadati</taxon>
        <taxon>Pseudomonadota</taxon>
        <taxon>Alphaproteobacteria</taxon>
        <taxon>Hyphomicrobiales</taxon>
        <taxon>Xanthobacteraceae</taxon>
        <taxon>Xanthobacter</taxon>
    </lineage>
</organism>
<reference key="1">
    <citation type="submission" date="2007-07" db="EMBL/GenBank/DDBJ databases">
        <title>Complete sequence of chromosome of Xanthobacter autotrophicus Py2.</title>
        <authorList>
            <consortium name="US DOE Joint Genome Institute"/>
            <person name="Copeland A."/>
            <person name="Lucas S."/>
            <person name="Lapidus A."/>
            <person name="Barry K."/>
            <person name="Glavina del Rio T."/>
            <person name="Hammon N."/>
            <person name="Israni S."/>
            <person name="Dalin E."/>
            <person name="Tice H."/>
            <person name="Pitluck S."/>
            <person name="Sims D."/>
            <person name="Brettin T."/>
            <person name="Bruce D."/>
            <person name="Detter J.C."/>
            <person name="Han C."/>
            <person name="Tapia R."/>
            <person name="Brainard J."/>
            <person name="Schmutz J."/>
            <person name="Larimer F."/>
            <person name="Land M."/>
            <person name="Hauser L."/>
            <person name="Kyrpides N."/>
            <person name="Kim E."/>
            <person name="Ensigns S.A."/>
            <person name="Richardson P."/>
        </authorList>
    </citation>
    <scope>NUCLEOTIDE SEQUENCE [LARGE SCALE GENOMIC DNA]</scope>
    <source>
        <strain>ATCC BAA-1158 / Py2</strain>
    </source>
</reference>
<gene>
    <name evidence="1" type="primary">rpsQ</name>
    <name type="ordered locus">Xaut_1688</name>
</gene>
<evidence type="ECO:0000255" key="1">
    <source>
        <dbReference type="HAMAP-Rule" id="MF_01345"/>
    </source>
</evidence>
<evidence type="ECO:0000305" key="2"/>
<protein>
    <recommendedName>
        <fullName evidence="1">Small ribosomal subunit protein uS17</fullName>
    </recommendedName>
    <alternativeName>
        <fullName evidence="2">30S ribosomal protein S17</fullName>
    </alternativeName>
</protein>
<comment type="function">
    <text evidence="1">One of the primary rRNA binding proteins, it binds specifically to the 5'-end of 16S ribosomal RNA.</text>
</comment>
<comment type="subunit">
    <text evidence="1">Part of the 30S ribosomal subunit.</text>
</comment>
<comment type="similarity">
    <text evidence="1">Belongs to the universal ribosomal protein uS17 family.</text>
</comment>
<name>RS17_XANP2</name>
<proteinExistence type="inferred from homology"/>
<sequence length="82" mass="9653">MPKRVLQGVVVSDKTDKTVVVRVERRFTHPLLKKTVRRSKKYHAHDEANAWKVGDTVWIEEHRPISKLKNWIVIQGEKRAEV</sequence>
<keyword id="KW-1185">Reference proteome</keyword>
<keyword id="KW-0687">Ribonucleoprotein</keyword>
<keyword id="KW-0689">Ribosomal protein</keyword>
<keyword id="KW-0694">RNA-binding</keyword>
<keyword id="KW-0699">rRNA-binding</keyword>